<proteinExistence type="predicted"/>
<feature type="peptide" id="PRO_0000045080" description="rho operon leader peptide">
    <location>
        <begin position="1"/>
        <end position="33"/>
    </location>
</feature>
<feature type="region of interest" description="Disordered" evidence="1">
    <location>
        <begin position="1"/>
        <end position="33"/>
    </location>
</feature>
<feature type="compositionally biased region" description="Polar residues" evidence="1">
    <location>
        <begin position="1"/>
        <end position="25"/>
    </location>
</feature>
<gene>
    <name type="primary">rhoL</name>
    <name type="ordered locus">c5501</name>
</gene>
<name>LPRH_ECOL6</name>
<reference key="1">
    <citation type="journal article" date="2002" name="Proc. Natl. Acad. Sci. U.S.A.">
        <title>Extensive mosaic structure revealed by the complete genome sequence of uropathogenic Escherichia coli.</title>
        <authorList>
            <person name="Welch R.A."/>
            <person name="Burland V."/>
            <person name="Plunkett G. III"/>
            <person name="Redford P."/>
            <person name="Roesch P."/>
            <person name="Rasko D."/>
            <person name="Buckles E.L."/>
            <person name="Liou S.-R."/>
            <person name="Boutin A."/>
            <person name="Hackett J."/>
            <person name="Stroud D."/>
            <person name="Mayhew G.F."/>
            <person name="Rose D.J."/>
            <person name="Zhou S."/>
            <person name="Schwartz D.C."/>
            <person name="Perna N.T."/>
            <person name="Mobley H.L.T."/>
            <person name="Donnenberg M.S."/>
            <person name="Blattner F.R."/>
        </authorList>
    </citation>
    <scope>NUCLEOTIDE SEQUENCE [LARGE SCALE GENOMIC DNA]</scope>
    <source>
        <strain>CFT073 / ATCC 700928 / UPEC</strain>
    </source>
</reference>
<evidence type="ECO:0000256" key="1">
    <source>
        <dbReference type="SAM" id="MobiDB-lite"/>
    </source>
</evidence>
<organism>
    <name type="scientific">Escherichia coli O6:H1 (strain CFT073 / ATCC 700928 / UPEC)</name>
    <dbReference type="NCBI Taxonomy" id="199310"/>
    <lineage>
        <taxon>Bacteria</taxon>
        <taxon>Pseudomonadati</taxon>
        <taxon>Pseudomonadota</taxon>
        <taxon>Gammaproteobacteria</taxon>
        <taxon>Enterobacterales</taxon>
        <taxon>Enterobacteriaceae</taxon>
        <taxon>Escherichia</taxon>
    </lineage>
</organism>
<keyword id="KW-0428">Leader peptide</keyword>
<keyword id="KW-1185">Reference proteome</keyword>
<dbReference type="EMBL" id="AE014075">
    <property type="protein sequence ID" value="AAN83134.1"/>
    <property type="molecule type" value="Genomic_DNA"/>
</dbReference>
<dbReference type="RefSeq" id="WP_001295255.1">
    <property type="nucleotide sequence ID" value="NZ_CP051263.1"/>
</dbReference>
<dbReference type="STRING" id="199310.c5501"/>
<dbReference type="GeneID" id="93778162"/>
<dbReference type="KEGG" id="ecc:c5501"/>
<dbReference type="eggNOG" id="ENOG502ZHQE">
    <property type="taxonomic scope" value="Bacteria"/>
</dbReference>
<dbReference type="HOGENOM" id="CLU_3381617_0_0_6"/>
<dbReference type="BioCyc" id="ECOL199310:C5501-MONOMER"/>
<dbReference type="Proteomes" id="UP000001410">
    <property type="component" value="Chromosome"/>
</dbReference>
<dbReference type="NCBIfam" id="NF007433">
    <property type="entry name" value="PRK09979.1"/>
    <property type="match status" value="1"/>
</dbReference>
<sequence>MRSEQISGSSLNPSCRFSSAYSPVTRQRKDMSR</sequence>
<accession>P0ADF4</accession>
<accession>P37324</accession>
<protein>
    <recommendedName>
        <fullName>rho operon leader peptide</fullName>
    </recommendedName>
</protein>